<gene>
    <name evidence="1" type="primary">trpA</name>
    <name type="ordered locus">Lferr_1726</name>
</gene>
<organism>
    <name type="scientific">Acidithiobacillus ferrooxidans (strain ATCC 53993 / BNL-5-31)</name>
    <name type="common">Leptospirillum ferrooxidans (ATCC 53993)</name>
    <dbReference type="NCBI Taxonomy" id="380394"/>
    <lineage>
        <taxon>Bacteria</taxon>
        <taxon>Pseudomonadati</taxon>
        <taxon>Pseudomonadota</taxon>
        <taxon>Acidithiobacillia</taxon>
        <taxon>Acidithiobacillales</taxon>
        <taxon>Acidithiobacillaceae</taxon>
        <taxon>Acidithiobacillus</taxon>
    </lineage>
</organism>
<keyword id="KW-0028">Amino-acid biosynthesis</keyword>
<keyword id="KW-0057">Aromatic amino acid biosynthesis</keyword>
<keyword id="KW-0456">Lyase</keyword>
<keyword id="KW-0822">Tryptophan biosynthesis</keyword>
<dbReference type="EC" id="4.2.1.20" evidence="1"/>
<dbReference type="EMBL" id="CP001132">
    <property type="protein sequence ID" value="ACH83948.1"/>
    <property type="molecule type" value="Genomic_DNA"/>
</dbReference>
<dbReference type="RefSeq" id="WP_009567136.1">
    <property type="nucleotide sequence ID" value="NC_011206.1"/>
</dbReference>
<dbReference type="SMR" id="B5EK17"/>
<dbReference type="GeneID" id="65281204"/>
<dbReference type="KEGG" id="afe:Lferr_1726"/>
<dbReference type="eggNOG" id="COG0159">
    <property type="taxonomic scope" value="Bacteria"/>
</dbReference>
<dbReference type="HOGENOM" id="CLU_016734_0_0_6"/>
<dbReference type="UniPathway" id="UPA00035">
    <property type="reaction ID" value="UER00044"/>
</dbReference>
<dbReference type="GO" id="GO:0005829">
    <property type="term" value="C:cytosol"/>
    <property type="evidence" value="ECO:0007669"/>
    <property type="project" value="TreeGrafter"/>
</dbReference>
<dbReference type="GO" id="GO:0004834">
    <property type="term" value="F:tryptophan synthase activity"/>
    <property type="evidence" value="ECO:0007669"/>
    <property type="project" value="UniProtKB-UniRule"/>
</dbReference>
<dbReference type="CDD" id="cd04724">
    <property type="entry name" value="Tryptophan_synthase_alpha"/>
    <property type="match status" value="1"/>
</dbReference>
<dbReference type="FunFam" id="3.20.20.70:FF:000037">
    <property type="entry name" value="Tryptophan synthase alpha chain"/>
    <property type="match status" value="1"/>
</dbReference>
<dbReference type="Gene3D" id="3.20.20.70">
    <property type="entry name" value="Aldolase class I"/>
    <property type="match status" value="1"/>
</dbReference>
<dbReference type="HAMAP" id="MF_00131">
    <property type="entry name" value="Trp_synth_alpha"/>
    <property type="match status" value="1"/>
</dbReference>
<dbReference type="InterPro" id="IPR013785">
    <property type="entry name" value="Aldolase_TIM"/>
</dbReference>
<dbReference type="InterPro" id="IPR011060">
    <property type="entry name" value="RibuloseP-bd_barrel"/>
</dbReference>
<dbReference type="InterPro" id="IPR018204">
    <property type="entry name" value="Trp_synthase_alpha_AS"/>
</dbReference>
<dbReference type="InterPro" id="IPR002028">
    <property type="entry name" value="Trp_synthase_suA"/>
</dbReference>
<dbReference type="NCBIfam" id="TIGR00262">
    <property type="entry name" value="trpA"/>
    <property type="match status" value="1"/>
</dbReference>
<dbReference type="PANTHER" id="PTHR43406:SF1">
    <property type="entry name" value="TRYPTOPHAN SYNTHASE ALPHA CHAIN, CHLOROPLASTIC"/>
    <property type="match status" value="1"/>
</dbReference>
<dbReference type="PANTHER" id="PTHR43406">
    <property type="entry name" value="TRYPTOPHAN SYNTHASE, ALPHA CHAIN"/>
    <property type="match status" value="1"/>
</dbReference>
<dbReference type="Pfam" id="PF00290">
    <property type="entry name" value="Trp_syntA"/>
    <property type="match status" value="1"/>
</dbReference>
<dbReference type="SUPFAM" id="SSF51366">
    <property type="entry name" value="Ribulose-phoshate binding barrel"/>
    <property type="match status" value="1"/>
</dbReference>
<dbReference type="PROSITE" id="PS00167">
    <property type="entry name" value="TRP_SYNTHASE_ALPHA"/>
    <property type="match status" value="1"/>
</dbReference>
<name>TRPA_ACIF5</name>
<sequence length="272" mass="28566">MSRLAGLFVQLRDAGRAALIPFMTAGDPSLTATVPLMHALVAAGADAIELGMPFSDPMADGPSIQRASERALARGVKLRMVLEWVREFRTTNSHTPVILMGYLNPVEAMGITSFAEAAATAGVDGVILVDLTPEEGRGEAVVLRQRGIDPIFLLAPTSGPERVATVRSMGSGFVYYVSLRGITGAAQADWAEVLERVQHLHRQLGLPVAIGFGIRDAATVARVATGADAVVVGSALVDQLAACATDQEAIAAAIRFVEPLAQAVRSTERRGA</sequence>
<accession>B5EK17</accession>
<proteinExistence type="inferred from homology"/>
<feature type="chain" id="PRO_1000095688" description="Tryptophan synthase alpha chain">
    <location>
        <begin position="1"/>
        <end position="272"/>
    </location>
</feature>
<feature type="active site" description="Proton acceptor" evidence="1">
    <location>
        <position position="49"/>
    </location>
</feature>
<feature type="active site" description="Proton acceptor" evidence="1">
    <location>
        <position position="60"/>
    </location>
</feature>
<evidence type="ECO:0000255" key="1">
    <source>
        <dbReference type="HAMAP-Rule" id="MF_00131"/>
    </source>
</evidence>
<protein>
    <recommendedName>
        <fullName evidence="1">Tryptophan synthase alpha chain</fullName>
        <ecNumber evidence="1">4.2.1.20</ecNumber>
    </recommendedName>
</protein>
<reference key="1">
    <citation type="submission" date="2008-08" db="EMBL/GenBank/DDBJ databases">
        <title>Complete sequence of Acidithiobacillus ferrooxidans ATCC 53993.</title>
        <authorList>
            <person name="Lucas S."/>
            <person name="Copeland A."/>
            <person name="Lapidus A."/>
            <person name="Glavina del Rio T."/>
            <person name="Dalin E."/>
            <person name="Tice H."/>
            <person name="Bruce D."/>
            <person name="Goodwin L."/>
            <person name="Pitluck S."/>
            <person name="Sims D."/>
            <person name="Brettin T."/>
            <person name="Detter J.C."/>
            <person name="Han C."/>
            <person name="Kuske C.R."/>
            <person name="Larimer F."/>
            <person name="Land M."/>
            <person name="Hauser L."/>
            <person name="Kyrpides N."/>
            <person name="Lykidis A."/>
            <person name="Borole A.P."/>
        </authorList>
    </citation>
    <scope>NUCLEOTIDE SEQUENCE [LARGE SCALE GENOMIC DNA]</scope>
    <source>
        <strain>ATCC 53993 / BNL-5-31</strain>
    </source>
</reference>
<comment type="function">
    <text evidence="1">The alpha subunit is responsible for the aldol cleavage of indoleglycerol phosphate to indole and glyceraldehyde 3-phosphate.</text>
</comment>
<comment type="catalytic activity">
    <reaction evidence="1">
        <text>(1S,2R)-1-C-(indol-3-yl)glycerol 3-phosphate + L-serine = D-glyceraldehyde 3-phosphate + L-tryptophan + H2O</text>
        <dbReference type="Rhea" id="RHEA:10532"/>
        <dbReference type="ChEBI" id="CHEBI:15377"/>
        <dbReference type="ChEBI" id="CHEBI:33384"/>
        <dbReference type="ChEBI" id="CHEBI:57912"/>
        <dbReference type="ChEBI" id="CHEBI:58866"/>
        <dbReference type="ChEBI" id="CHEBI:59776"/>
        <dbReference type="EC" id="4.2.1.20"/>
    </reaction>
</comment>
<comment type="pathway">
    <text evidence="1">Amino-acid biosynthesis; L-tryptophan biosynthesis; L-tryptophan from chorismate: step 5/5.</text>
</comment>
<comment type="subunit">
    <text evidence="1">Tetramer of two alpha and two beta chains.</text>
</comment>
<comment type="similarity">
    <text evidence="1">Belongs to the TrpA family.</text>
</comment>